<feature type="transit peptide" description="Chloroplast">
    <location>
        <begin position="1"/>
        <end position="52"/>
    </location>
</feature>
<feature type="chain" id="PRO_0000008825" description="Ferredoxin-2, chloroplastic">
    <location>
        <begin position="53"/>
        <end position="148"/>
    </location>
</feature>
<feature type="domain" description="2Fe-2S ferredoxin-type" evidence="1">
    <location>
        <begin position="55"/>
        <end position="145"/>
    </location>
</feature>
<feature type="binding site" evidence="1">
    <location>
        <position position="91"/>
    </location>
    <ligand>
        <name>[2Fe-2S] cluster</name>
        <dbReference type="ChEBI" id="CHEBI:190135"/>
    </ligand>
</feature>
<feature type="binding site" evidence="1">
    <location>
        <position position="96"/>
    </location>
    <ligand>
        <name>[2Fe-2S] cluster</name>
        <dbReference type="ChEBI" id="CHEBI:190135"/>
    </ligand>
</feature>
<feature type="binding site" evidence="1">
    <location>
        <position position="99"/>
    </location>
    <ligand>
        <name>[2Fe-2S] cluster</name>
        <dbReference type="ChEBI" id="CHEBI:190135"/>
    </ligand>
</feature>
<feature type="binding site" evidence="1">
    <location>
        <position position="129"/>
    </location>
    <ligand>
        <name>[2Fe-2S] cluster</name>
        <dbReference type="ChEBI" id="CHEBI:190135"/>
    </ligand>
</feature>
<feature type="strand" evidence="6">
    <location>
        <begin position="54"/>
        <end position="60"/>
    </location>
</feature>
<feature type="strand" evidence="6">
    <location>
        <begin position="65"/>
        <end position="71"/>
    </location>
</feature>
<feature type="helix" evidence="6">
    <location>
        <begin position="76"/>
        <end position="83"/>
    </location>
</feature>
<feature type="strand" evidence="5">
    <location>
        <begin position="90"/>
        <end position="94"/>
    </location>
</feature>
<feature type="strand" evidence="5">
    <location>
        <begin position="100"/>
        <end position="106"/>
    </location>
</feature>
<feature type="helix" evidence="5">
    <location>
        <begin position="118"/>
        <end position="122"/>
    </location>
</feature>
<feature type="strand" evidence="5">
    <location>
        <begin position="125"/>
        <end position="127"/>
    </location>
</feature>
<feature type="helix" evidence="5">
    <location>
        <begin position="128"/>
        <end position="130"/>
    </location>
</feature>
<feature type="strand" evidence="6">
    <location>
        <begin position="138"/>
        <end position="140"/>
    </location>
</feature>
<sequence length="148" mass="15539">MASTALSSAIVGTSFIRRSPAPISLRSLPSANTQSLFGLKSGTARGGRVTAMATYKVKFITPEGELEVECDDDVYVLDAAEEAGIDLPYSCRAGSCSSCAGKVVSGSVDQSDQSFLDDEQIGEGFVLTCAAYPTSDVTIETHKEEDIV</sequence>
<dbReference type="EMBL" id="X51370">
    <property type="protein sequence ID" value="CAA35754.1"/>
    <property type="molecule type" value="Genomic_DNA"/>
</dbReference>
<dbReference type="EMBL" id="M35868">
    <property type="protein sequence ID" value="AAA32790.1"/>
    <property type="molecule type" value="mRNA"/>
</dbReference>
<dbReference type="EMBL" id="AC018908">
    <property type="protein sequence ID" value="AAG51652.1"/>
    <property type="molecule type" value="Genomic_DNA"/>
</dbReference>
<dbReference type="EMBL" id="CP002684">
    <property type="protein sequence ID" value="AEE33752.1"/>
    <property type="molecule type" value="Genomic_DNA"/>
</dbReference>
<dbReference type="EMBL" id="AF324706">
    <property type="protein sequence ID" value="AAG40057.1"/>
    <property type="molecule type" value="mRNA"/>
</dbReference>
<dbReference type="EMBL" id="AF326885">
    <property type="protein sequence ID" value="AAG41467.1"/>
    <property type="molecule type" value="mRNA"/>
</dbReference>
<dbReference type="EMBL" id="AF339705">
    <property type="protein sequence ID" value="AAK00387.1"/>
    <property type="molecule type" value="mRNA"/>
</dbReference>
<dbReference type="EMBL" id="AY093034">
    <property type="protein sequence ID" value="AAM13033.1"/>
    <property type="molecule type" value="mRNA"/>
</dbReference>
<dbReference type="EMBL" id="AY128936">
    <property type="protein sequence ID" value="AAM91336.1"/>
    <property type="molecule type" value="mRNA"/>
</dbReference>
<dbReference type="EMBL" id="AK226379">
    <property type="protein sequence ID" value="BAE98526.1"/>
    <property type="molecule type" value="mRNA"/>
</dbReference>
<dbReference type="PIR" id="S09979">
    <property type="entry name" value="S09979"/>
</dbReference>
<dbReference type="RefSeq" id="NP_176291.1">
    <property type="nucleotide sequence ID" value="NM_104775.3"/>
</dbReference>
<dbReference type="PDB" id="4ZHO">
    <property type="method" value="X-ray"/>
    <property type="resolution" value="2.34 A"/>
    <property type="chains" value="A/B=52-145"/>
</dbReference>
<dbReference type="PDB" id="6B03">
    <property type="method" value="X-ray"/>
    <property type="resolution" value="2.70 A"/>
    <property type="chains" value="C/F=53-145"/>
</dbReference>
<dbReference type="PDB" id="6B05">
    <property type="method" value="X-ray"/>
    <property type="resolution" value="1.90 A"/>
    <property type="chains" value="B/C=53-145"/>
</dbReference>
<dbReference type="PDB" id="6BRS">
    <property type="method" value="X-ray"/>
    <property type="resolution" value="2.30 A"/>
    <property type="chains" value="C/F=53-145"/>
</dbReference>
<dbReference type="PDBsum" id="4ZHO"/>
<dbReference type="PDBsum" id="6B03"/>
<dbReference type="PDBsum" id="6B05"/>
<dbReference type="PDBsum" id="6BRS"/>
<dbReference type="SASBDB" id="P16972"/>
<dbReference type="SMR" id="P16972"/>
<dbReference type="BioGRID" id="27610">
    <property type="interactions" value="12"/>
</dbReference>
<dbReference type="FunCoup" id="P16972">
    <property type="interactions" value="722"/>
</dbReference>
<dbReference type="IntAct" id="P16972">
    <property type="interactions" value="4"/>
</dbReference>
<dbReference type="STRING" id="3702.P16972"/>
<dbReference type="iPTMnet" id="P16972"/>
<dbReference type="PaxDb" id="3702-AT1G60950.1"/>
<dbReference type="ProteomicsDB" id="230775"/>
<dbReference type="EnsemblPlants" id="AT1G60950.1">
    <property type="protein sequence ID" value="AT1G60950.1"/>
    <property type="gene ID" value="AT1G60950"/>
</dbReference>
<dbReference type="GeneID" id="842386"/>
<dbReference type="Gramene" id="AT1G60950.1">
    <property type="protein sequence ID" value="AT1G60950.1"/>
    <property type="gene ID" value="AT1G60950"/>
</dbReference>
<dbReference type="KEGG" id="ath:AT1G60950"/>
<dbReference type="Araport" id="AT1G60950"/>
<dbReference type="TAIR" id="AT1G60950">
    <property type="gene designation" value="FED A"/>
</dbReference>
<dbReference type="eggNOG" id="ENOG502RXFZ">
    <property type="taxonomic scope" value="Eukaryota"/>
</dbReference>
<dbReference type="HOGENOM" id="CLU_082632_1_1_1"/>
<dbReference type="InParanoid" id="P16972"/>
<dbReference type="OMA" id="ITAMAMY"/>
<dbReference type="PhylomeDB" id="P16972"/>
<dbReference type="PRO" id="PR:P16972"/>
<dbReference type="Proteomes" id="UP000006548">
    <property type="component" value="Chromosome 1"/>
</dbReference>
<dbReference type="ExpressionAtlas" id="P16972">
    <property type="expression patterns" value="baseline and differential"/>
</dbReference>
<dbReference type="GO" id="GO:0009507">
    <property type="term" value="C:chloroplast"/>
    <property type="evidence" value="ECO:0007005"/>
    <property type="project" value="TAIR"/>
</dbReference>
<dbReference type="GO" id="GO:0051537">
    <property type="term" value="F:2 iron, 2 sulfur cluster binding"/>
    <property type="evidence" value="ECO:0007669"/>
    <property type="project" value="UniProtKB-KW"/>
</dbReference>
<dbReference type="GO" id="GO:0009055">
    <property type="term" value="F:electron transfer activity"/>
    <property type="evidence" value="ECO:0007669"/>
    <property type="project" value="InterPro"/>
</dbReference>
<dbReference type="GO" id="GO:0046872">
    <property type="term" value="F:metal ion binding"/>
    <property type="evidence" value="ECO:0007669"/>
    <property type="project" value="UniProtKB-KW"/>
</dbReference>
<dbReference type="GO" id="GO:0009643">
    <property type="term" value="P:photosynthetic acclimation"/>
    <property type="evidence" value="ECO:0000315"/>
    <property type="project" value="TAIR"/>
</dbReference>
<dbReference type="GO" id="GO:0009767">
    <property type="term" value="P:photosynthetic electron transport chain"/>
    <property type="evidence" value="ECO:0000315"/>
    <property type="project" value="TAIR"/>
</dbReference>
<dbReference type="CDD" id="cd00207">
    <property type="entry name" value="fer2"/>
    <property type="match status" value="1"/>
</dbReference>
<dbReference type="FunFam" id="3.10.20.30:FF:000014">
    <property type="entry name" value="Ferredoxin"/>
    <property type="match status" value="1"/>
</dbReference>
<dbReference type="Gene3D" id="3.10.20.30">
    <property type="match status" value="1"/>
</dbReference>
<dbReference type="InterPro" id="IPR036010">
    <property type="entry name" value="2Fe-2S_ferredoxin-like_sf"/>
</dbReference>
<dbReference type="InterPro" id="IPR001041">
    <property type="entry name" value="2Fe-2S_ferredoxin-type"/>
</dbReference>
<dbReference type="InterPro" id="IPR006058">
    <property type="entry name" value="2Fe2S_fd_BS"/>
</dbReference>
<dbReference type="InterPro" id="IPR012675">
    <property type="entry name" value="Beta-grasp_dom_sf"/>
</dbReference>
<dbReference type="InterPro" id="IPR010241">
    <property type="entry name" value="Fd_pln"/>
</dbReference>
<dbReference type="NCBIfam" id="TIGR02008">
    <property type="entry name" value="fdx_plant"/>
    <property type="match status" value="1"/>
</dbReference>
<dbReference type="PANTHER" id="PTHR43112">
    <property type="entry name" value="FERREDOXIN"/>
    <property type="match status" value="1"/>
</dbReference>
<dbReference type="PANTHER" id="PTHR43112:SF3">
    <property type="entry name" value="FERREDOXIN-2, CHLOROPLASTIC"/>
    <property type="match status" value="1"/>
</dbReference>
<dbReference type="Pfam" id="PF00111">
    <property type="entry name" value="Fer2"/>
    <property type="match status" value="1"/>
</dbReference>
<dbReference type="SUPFAM" id="SSF54292">
    <property type="entry name" value="2Fe-2S ferredoxin-like"/>
    <property type="match status" value="1"/>
</dbReference>
<dbReference type="PROSITE" id="PS00197">
    <property type="entry name" value="2FE2S_FER_1"/>
    <property type="match status" value="1"/>
</dbReference>
<dbReference type="PROSITE" id="PS51085">
    <property type="entry name" value="2FE2S_FER_2"/>
    <property type="match status" value="1"/>
</dbReference>
<keyword id="KW-0001">2Fe-2S</keyword>
<keyword id="KW-0002">3D-structure</keyword>
<keyword id="KW-0150">Chloroplast</keyword>
<keyword id="KW-0249">Electron transport</keyword>
<keyword id="KW-0408">Iron</keyword>
<keyword id="KW-0411">Iron-sulfur</keyword>
<keyword id="KW-0479">Metal-binding</keyword>
<keyword id="KW-0934">Plastid</keyword>
<keyword id="KW-1185">Reference proteome</keyword>
<keyword id="KW-0809">Transit peptide</keyword>
<keyword id="KW-0813">Transport</keyword>
<reference key="1">
    <citation type="journal article" date="1990" name="Plant Mol. Biol.">
        <title>Tissue-specific expression directed by an Arabidopsis thaliana pre-ferredoxin promoter in transgenic tobacco plants.</title>
        <authorList>
            <person name="Vorst O."/>
            <person name="van Dam F."/>
            <person name="Oosterhoff-Teertstra R."/>
            <person name="Smeekens S."/>
            <person name="Weisbeek P."/>
        </authorList>
    </citation>
    <scope>NUCLEOTIDE SEQUENCE [GENOMIC DNA]</scope>
    <source>
        <strain>cv. Columbia</strain>
    </source>
</reference>
<reference key="2">
    <citation type="journal article" date="1990" name="Plant Physiol.">
        <title>Isolation and characterization of a ferredoxin gene from Arabidopsis thaliana.</title>
        <authorList>
            <person name="Somers D.E."/>
            <person name="Caspar T."/>
            <person name="Quail P.H."/>
        </authorList>
    </citation>
    <scope>NUCLEOTIDE SEQUENCE [MRNA]</scope>
</reference>
<reference key="3">
    <citation type="journal article" date="2000" name="Nature">
        <title>Sequence and analysis of chromosome 1 of the plant Arabidopsis thaliana.</title>
        <authorList>
            <person name="Theologis A."/>
            <person name="Ecker J.R."/>
            <person name="Palm C.J."/>
            <person name="Federspiel N.A."/>
            <person name="Kaul S."/>
            <person name="White O."/>
            <person name="Alonso J."/>
            <person name="Altafi H."/>
            <person name="Araujo R."/>
            <person name="Bowman C.L."/>
            <person name="Brooks S.Y."/>
            <person name="Buehler E."/>
            <person name="Chan A."/>
            <person name="Chao Q."/>
            <person name="Chen H."/>
            <person name="Cheuk R.F."/>
            <person name="Chin C.W."/>
            <person name="Chung M.K."/>
            <person name="Conn L."/>
            <person name="Conway A.B."/>
            <person name="Conway A.R."/>
            <person name="Creasy T.H."/>
            <person name="Dewar K."/>
            <person name="Dunn P."/>
            <person name="Etgu P."/>
            <person name="Feldblyum T.V."/>
            <person name="Feng J.-D."/>
            <person name="Fong B."/>
            <person name="Fujii C.Y."/>
            <person name="Gill J.E."/>
            <person name="Goldsmith A.D."/>
            <person name="Haas B."/>
            <person name="Hansen N.F."/>
            <person name="Hughes B."/>
            <person name="Huizar L."/>
            <person name="Hunter J.L."/>
            <person name="Jenkins J."/>
            <person name="Johnson-Hopson C."/>
            <person name="Khan S."/>
            <person name="Khaykin E."/>
            <person name="Kim C.J."/>
            <person name="Koo H.L."/>
            <person name="Kremenetskaia I."/>
            <person name="Kurtz D.B."/>
            <person name="Kwan A."/>
            <person name="Lam B."/>
            <person name="Langin-Hooper S."/>
            <person name="Lee A."/>
            <person name="Lee J.M."/>
            <person name="Lenz C.A."/>
            <person name="Li J.H."/>
            <person name="Li Y.-P."/>
            <person name="Lin X."/>
            <person name="Liu S.X."/>
            <person name="Liu Z.A."/>
            <person name="Luros J.S."/>
            <person name="Maiti R."/>
            <person name="Marziali A."/>
            <person name="Militscher J."/>
            <person name="Miranda M."/>
            <person name="Nguyen M."/>
            <person name="Nierman W.C."/>
            <person name="Osborne B.I."/>
            <person name="Pai G."/>
            <person name="Peterson J."/>
            <person name="Pham P.K."/>
            <person name="Rizzo M."/>
            <person name="Rooney T."/>
            <person name="Rowley D."/>
            <person name="Sakano H."/>
            <person name="Salzberg S.L."/>
            <person name="Schwartz J.R."/>
            <person name="Shinn P."/>
            <person name="Southwick A.M."/>
            <person name="Sun H."/>
            <person name="Tallon L.J."/>
            <person name="Tambunga G."/>
            <person name="Toriumi M.J."/>
            <person name="Town C.D."/>
            <person name="Utterback T."/>
            <person name="Van Aken S."/>
            <person name="Vaysberg M."/>
            <person name="Vysotskaia V.S."/>
            <person name="Walker M."/>
            <person name="Wu D."/>
            <person name="Yu G."/>
            <person name="Fraser C.M."/>
            <person name="Venter J.C."/>
            <person name="Davis R.W."/>
        </authorList>
    </citation>
    <scope>NUCLEOTIDE SEQUENCE [LARGE SCALE GENOMIC DNA]</scope>
    <source>
        <strain>cv. Columbia</strain>
    </source>
</reference>
<reference key="4">
    <citation type="journal article" date="2017" name="Plant J.">
        <title>Araport11: a complete reannotation of the Arabidopsis thaliana reference genome.</title>
        <authorList>
            <person name="Cheng C.Y."/>
            <person name="Krishnakumar V."/>
            <person name="Chan A.P."/>
            <person name="Thibaud-Nissen F."/>
            <person name="Schobel S."/>
            <person name="Town C.D."/>
        </authorList>
    </citation>
    <scope>GENOME REANNOTATION</scope>
    <source>
        <strain>cv. Columbia</strain>
    </source>
</reference>
<reference key="5">
    <citation type="journal article" date="2003" name="Science">
        <title>Empirical analysis of transcriptional activity in the Arabidopsis genome.</title>
        <authorList>
            <person name="Yamada K."/>
            <person name="Lim J."/>
            <person name="Dale J.M."/>
            <person name="Chen H."/>
            <person name="Shinn P."/>
            <person name="Palm C.J."/>
            <person name="Southwick A.M."/>
            <person name="Wu H.C."/>
            <person name="Kim C.J."/>
            <person name="Nguyen M."/>
            <person name="Pham P.K."/>
            <person name="Cheuk R.F."/>
            <person name="Karlin-Newmann G."/>
            <person name="Liu S.X."/>
            <person name="Lam B."/>
            <person name="Sakano H."/>
            <person name="Wu T."/>
            <person name="Yu G."/>
            <person name="Miranda M."/>
            <person name="Quach H.L."/>
            <person name="Tripp M."/>
            <person name="Chang C.H."/>
            <person name="Lee J.M."/>
            <person name="Toriumi M.J."/>
            <person name="Chan M.M."/>
            <person name="Tang C.C."/>
            <person name="Onodera C.S."/>
            <person name="Deng J.M."/>
            <person name="Akiyama K."/>
            <person name="Ansari Y."/>
            <person name="Arakawa T."/>
            <person name="Banh J."/>
            <person name="Banno F."/>
            <person name="Bowser L."/>
            <person name="Brooks S.Y."/>
            <person name="Carninci P."/>
            <person name="Chao Q."/>
            <person name="Choy N."/>
            <person name="Enju A."/>
            <person name="Goldsmith A.D."/>
            <person name="Gurjal M."/>
            <person name="Hansen N.F."/>
            <person name="Hayashizaki Y."/>
            <person name="Johnson-Hopson C."/>
            <person name="Hsuan V.W."/>
            <person name="Iida K."/>
            <person name="Karnes M."/>
            <person name="Khan S."/>
            <person name="Koesema E."/>
            <person name="Ishida J."/>
            <person name="Jiang P.X."/>
            <person name="Jones T."/>
            <person name="Kawai J."/>
            <person name="Kamiya A."/>
            <person name="Meyers C."/>
            <person name="Nakajima M."/>
            <person name="Narusaka M."/>
            <person name="Seki M."/>
            <person name="Sakurai T."/>
            <person name="Satou M."/>
            <person name="Tamse R."/>
            <person name="Vaysberg M."/>
            <person name="Wallender E.K."/>
            <person name="Wong C."/>
            <person name="Yamamura Y."/>
            <person name="Yuan S."/>
            <person name="Shinozaki K."/>
            <person name="Davis R.W."/>
            <person name="Theologis A."/>
            <person name="Ecker J.R."/>
        </authorList>
    </citation>
    <scope>NUCLEOTIDE SEQUENCE [LARGE SCALE MRNA]</scope>
    <source>
        <strain>cv. Columbia</strain>
    </source>
</reference>
<reference key="6">
    <citation type="submission" date="2006-07" db="EMBL/GenBank/DDBJ databases">
        <title>Large-scale analysis of RIKEN Arabidopsis full-length (RAFL) cDNAs.</title>
        <authorList>
            <person name="Totoki Y."/>
            <person name="Seki M."/>
            <person name="Ishida J."/>
            <person name="Nakajima M."/>
            <person name="Enju A."/>
            <person name="Kamiya A."/>
            <person name="Narusaka M."/>
            <person name="Shin-i T."/>
            <person name="Nakagawa M."/>
            <person name="Sakamoto N."/>
            <person name="Oishi K."/>
            <person name="Kohara Y."/>
            <person name="Kobayashi M."/>
            <person name="Toyoda A."/>
            <person name="Sakaki Y."/>
            <person name="Sakurai T."/>
            <person name="Iida K."/>
            <person name="Akiyama K."/>
            <person name="Satou M."/>
            <person name="Toyoda T."/>
            <person name="Konagaya A."/>
            <person name="Carninci P."/>
            <person name="Kawai J."/>
            <person name="Hayashizaki Y."/>
            <person name="Shinozaki K."/>
        </authorList>
    </citation>
    <scope>NUCLEOTIDE SEQUENCE [LARGE SCALE MRNA]</scope>
    <source>
        <strain>cv. Columbia</strain>
    </source>
</reference>
<reference key="7">
    <citation type="journal article" date="2004" name="Plant Physiol.">
        <title>A post genomic characterization of Arabidopsis ferredoxins.</title>
        <authorList>
            <person name="Hanke G.T."/>
            <person name="Kimata-Ariga Y."/>
            <person name="Taniguchi I."/>
            <person name="Hase T."/>
        </authorList>
    </citation>
    <scope>TISSUE SPECIFICITY</scope>
    <scope>BIOPHYSICOCHEMICAL PROPERTIES</scope>
    <scope>GENE FAMILY</scope>
    <scope>NOMENCLATURE</scope>
</reference>
<reference key="8">
    <citation type="journal article" date="2008" name="Cell">
        <title>A complex containing PGRL1 and PGR5 is involved in the switch between linear and cyclic electron flow in Arabidopsis.</title>
        <authorList>
            <person name="DalCorso G."/>
            <person name="Pesaresi P."/>
            <person name="Masiero S."/>
            <person name="Aseeva E."/>
            <person name="Schuenemann D."/>
            <person name="Finazzi G."/>
            <person name="Joliot P."/>
            <person name="Barbato R."/>
            <person name="Leister D."/>
        </authorList>
    </citation>
    <scope>INTERACTION WITH PGRL1A AND PGRL1B</scope>
    <source>
        <strain>cv. Columbia</strain>
    </source>
</reference>
<accession>P16972</accession>
<accession>Q0WWH2</accession>
<protein>
    <recommendedName>
        <fullName>Ferredoxin-2, chloroplastic</fullName>
        <shortName>AtFd2</shortName>
    </recommendedName>
</protein>
<evidence type="ECO:0000255" key="1">
    <source>
        <dbReference type="PROSITE-ProRule" id="PRU00465"/>
    </source>
</evidence>
<evidence type="ECO:0000269" key="2">
    <source>
    </source>
</evidence>
<evidence type="ECO:0000269" key="3">
    <source>
    </source>
</evidence>
<evidence type="ECO:0000305" key="4"/>
<evidence type="ECO:0007829" key="5">
    <source>
        <dbReference type="PDB" id="4ZHO"/>
    </source>
</evidence>
<evidence type="ECO:0007829" key="6">
    <source>
        <dbReference type="PDB" id="6B05"/>
    </source>
</evidence>
<proteinExistence type="evidence at protein level"/>
<name>FER2_ARATH</name>
<gene>
    <name type="primary">FD2</name>
    <name type="synonym">PETF</name>
    <name type="synonym">PETF1</name>
    <name type="ordered locus">At1g60950</name>
    <name type="ORF">T7P1.9</name>
</gene>
<organism>
    <name type="scientific">Arabidopsis thaliana</name>
    <name type="common">Mouse-ear cress</name>
    <dbReference type="NCBI Taxonomy" id="3702"/>
    <lineage>
        <taxon>Eukaryota</taxon>
        <taxon>Viridiplantae</taxon>
        <taxon>Streptophyta</taxon>
        <taxon>Embryophyta</taxon>
        <taxon>Tracheophyta</taxon>
        <taxon>Spermatophyta</taxon>
        <taxon>Magnoliopsida</taxon>
        <taxon>eudicotyledons</taxon>
        <taxon>Gunneridae</taxon>
        <taxon>Pentapetalae</taxon>
        <taxon>rosids</taxon>
        <taxon>malvids</taxon>
        <taxon>Brassicales</taxon>
        <taxon>Brassicaceae</taxon>
        <taxon>Camelineae</taxon>
        <taxon>Arabidopsis</taxon>
    </lineage>
</organism>
<comment type="function">
    <text>Ferredoxins are iron-sulfur proteins that transfer electrons in a wide variety of metabolic reactions.</text>
</comment>
<comment type="cofactor">
    <cofactor>
        <name>[2Fe-2S] cluster</name>
        <dbReference type="ChEBI" id="CHEBI:190135"/>
    </cofactor>
    <text>Binds 1 [2Fe-2S] cluster.</text>
</comment>
<comment type="biophysicochemical properties">
    <redoxPotential>
        <text evidence="2">E(0) is -433 mV.</text>
    </redoxPotential>
</comment>
<comment type="subunit">
    <text evidence="3">Interacts with PGRL1A and PGRL1B.</text>
</comment>
<comment type="interaction">
    <interactant intactId="EBI-449431">
        <id>P16972</id>
    </interactant>
    <interactant intactId="EBI-15193683">
        <id>Q5CCK4</id>
        <label>VAL2</label>
    </interactant>
    <organismsDiffer>false</organismsDiffer>
    <experiments>3</experiments>
</comment>
<comment type="subcellular location">
    <subcellularLocation>
        <location>Plastid</location>
        <location>Chloroplast</location>
    </subcellularLocation>
</comment>
<comment type="tissue specificity">
    <text evidence="2">Expressed in leaves. Not detected in roots.</text>
</comment>
<comment type="similarity">
    <text evidence="4">Belongs to the 2Fe2S plant-type ferredoxin family.</text>
</comment>